<name>RL16_LIMRJ</name>
<sequence length="144" mass="16006">MLVPKRVKHRKVQRGHMRGEAKGGKTVTFGEFGLQALDSHWISNRQIEAARIAMTRYMKRGGKVWIKIFPQLSYTSKGVGVRMGNGKGAPEGWVAPVKRGKVMFEVGGVSEEVAREALRLAGHKLPVRTKIVQREEVGGQSNEK</sequence>
<evidence type="ECO:0000255" key="1">
    <source>
        <dbReference type="HAMAP-Rule" id="MF_01342"/>
    </source>
</evidence>
<evidence type="ECO:0000256" key="2">
    <source>
        <dbReference type="SAM" id="MobiDB-lite"/>
    </source>
</evidence>
<evidence type="ECO:0000305" key="3"/>
<dbReference type="EMBL" id="AP007281">
    <property type="protein sequence ID" value="BAG25903.1"/>
    <property type="molecule type" value="Genomic_DNA"/>
</dbReference>
<dbReference type="RefSeq" id="WP_003664555.1">
    <property type="nucleotide sequence ID" value="NC_010609.1"/>
</dbReference>
<dbReference type="SMR" id="B2G8X1"/>
<dbReference type="GeneID" id="78174250"/>
<dbReference type="KEGG" id="lrf:LAR_1387"/>
<dbReference type="HOGENOM" id="CLU_078858_2_1_9"/>
<dbReference type="GO" id="GO:0022625">
    <property type="term" value="C:cytosolic large ribosomal subunit"/>
    <property type="evidence" value="ECO:0007669"/>
    <property type="project" value="TreeGrafter"/>
</dbReference>
<dbReference type="GO" id="GO:0019843">
    <property type="term" value="F:rRNA binding"/>
    <property type="evidence" value="ECO:0007669"/>
    <property type="project" value="UniProtKB-UniRule"/>
</dbReference>
<dbReference type="GO" id="GO:0003735">
    <property type="term" value="F:structural constituent of ribosome"/>
    <property type="evidence" value="ECO:0007669"/>
    <property type="project" value="InterPro"/>
</dbReference>
<dbReference type="GO" id="GO:0000049">
    <property type="term" value="F:tRNA binding"/>
    <property type="evidence" value="ECO:0007669"/>
    <property type="project" value="UniProtKB-KW"/>
</dbReference>
<dbReference type="GO" id="GO:0006412">
    <property type="term" value="P:translation"/>
    <property type="evidence" value="ECO:0007669"/>
    <property type="project" value="UniProtKB-UniRule"/>
</dbReference>
<dbReference type="CDD" id="cd01433">
    <property type="entry name" value="Ribosomal_L16_L10e"/>
    <property type="match status" value="1"/>
</dbReference>
<dbReference type="FunFam" id="3.90.1170.10:FF:000001">
    <property type="entry name" value="50S ribosomal protein L16"/>
    <property type="match status" value="1"/>
</dbReference>
<dbReference type="Gene3D" id="3.90.1170.10">
    <property type="entry name" value="Ribosomal protein L10e/L16"/>
    <property type="match status" value="1"/>
</dbReference>
<dbReference type="HAMAP" id="MF_01342">
    <property type="entry name" value="Ribosomal_uL16"/>
    <property type="match status" value="1"/>
</dbReference>
<dbReference type="InterPro" id="IPR047873">
    <property type="entry name" value="Ribosomal_uL16"/>
</dbReference>
<dbReference type="InterPro" id="IPR000114">
    <property type="entry name" value="Ribosomal_uL16_bact-type"/>
</dbReference>
<dbReference type="InterPro" id="IPR020798">
    <property type="entry name" value="Ribosomal_uL16_CS"/>
</dbReference>
<dbReference type="InterPro" id="IPR016180">
    <property type="entry name" value="Ribosomal_uL16_dom"/>
</dbReference>
<dbReference type="InterPro" id="IPR036920">
    <property type="entry name" value="Ribosomal_uL16_sf"/>
</dbReference>
<dbReference type="NCBIfam" id="TIGR01164">
    <property type="entry name" value="rplP_bact"/>
    <property type="match status" value="1"/>
</dbReference>
<dbReference type="PANTHER" id="PTHR12220">
    <property type="entry name" value="50S/60S RIBOSOMAL PROTEIN L16"/>
    <property type="match status" value="1"/>
</dbReference>
<dbReference type="PANTHER" id="PTHR12220:SF13">
    <property type="entry name" value="LARGE RIBOSOMAL SUBUNIT PROTEIN UL16M"/>
    <property type="match status" value="1"/>
</dbReference>
<dbReference type="Pfam" id="PF00252">
    <property type="entry name" value="Ribosomal_L16"/>
    <property type="match status" value="1"/>
</dbReference>
<dbReference type="PRINTS" id="PR00060">
    <property type="entry name" value="RIBOSOMALL16"/>
</dbReference>
<dbReference type="SUPFAM" id="SSF54686">
    <property type="entry name" value="Ribosomal protein L16p/L10e"/>
    <property type="match status" value="1"/>
</dbReference>
<dbReference type="PROSITE" id="PS00586">
    <property type="entry name" value="RIBOSOMAL_L16_1"/>
    <property type="match status" value="1"/>
</dbReference>
<dbReference type="PROSITE" id="PS00701">
    <property type="entry name" value="RIBOSOMAL_L16_2"/>
    <property type="match status" value="1"/>
</dbReference>
<protein>
    <recommendedName>
        <fullName evidence="1">Large ribosomal subunit protein uL16</fullName>
    </recommendedName>
    <alternativeName>
        <fullName evidence="3">50S ribosomal protein L16</fullName>
    </alternativeName>
</protein>
<accession>B2G8X1</accession>
<keyword id="KW-0687">Ribonucleoprotein</keyword>
<keyword id="KW-0689">Ribosomal protein</keyword>
<keyword id="KW-0694">RNA-binding</keyword>
<keyword id="KW-0699">rRNA-binding</keyword>
<keyword id="KW-0820">tRNA-binding</keyword>
<gene>
    <name evidence="1" type="primary">rplP</name>
    <name type="ordered locus">LAR_1387</name>
</gene>
<comment type="function">
    <text evidence="1">Binds 23S rRNA and is also seen to make contacts with the A and possibly P site tRNAs.</text>
</comment>
<comment type="subunit">
    <text evidence="1">Part of the 50S ribosomal subunit.</text>
</comment>
<comment type="similarity">
    <text evidence="1">Belongs to the universal ribosomal protein uL16 family.</text>
</comment>
<feature type="chain" id="PRO_1000142988" description="Large ribosomal subunit protein uL16">
    <location>
        <begin position="1"/>
        <end position="144"/>
    </location>
</feature>
<feature type="region of interest" description="Disordered" evidence="2">
    <location>
        <begin position="1"/>
        <end position="20"/>
    </location>
</feature>
<feature type="compositionally biased region" description="Basic residues" evidence="2">
    <location>
        <begin position="1"/>
        <end position="16"/>
    </location>
</feature>
<reference key="1">
    <citation type="journal article" date="2008" name="DNA Res.">
        <title>Comparative genome analysis of Lactobacillus reuteri and Lactobacillus fermentum reveal a genomic island for reuterin and cobalamin production.</title>
        <authorList>
            <person name="Morita H."/>
            <person name="Toh H."/>
            <person name="Fukuda S."/>
            <person name="Horikawa H."/>
            <person name="Oshima K."/>
            <person name="Suzuki T."/>
            <person name="Murakami M."/>
            <person name="Hisamatsu S."/>
            <person name="Kato Y."/>
            <person name="Takizawa T."/>
            <person name="Fukuoka H."/>
            <person name="Yoshimura T."/>
            <person name="Itoh K."/>
            <person name="O'Sullivan D.J."/>
            <person name="McKay L.L."/>
            <person name="Ohno H."/>
            <person name="Kikuchi J."/>
            <person name="Masaoka T."/>
            <person name="Hattori M."/>
        </authorList>
    </citation>
    <scope>NUCLEOTIDE SEQUENCE [LARGE SCALE GENOMIC DNA]</scope>
    <source>
        <strain>JCM 1112</strain>
    </source>
</reference>
<proteinExistence type="inferred from homology"/>
<organism>
    <name type="scientific">Limosilactobacillus reuteri subsp. reuteri (strain JCM 1112)</name>
    <name type="common">Lactobacillus reuteri</name>
    <dbReference type="NCBI Taxonomy" id="557433"/>
    <lineage>
        <taxon>Bacteria</taxon>
        <taxon>Bacillati</taxon>
        <taxon>Bacillota</taxon>
        <taxon>Bacilli</taxon>
        <taxon>Lactobacillales</taxon>
        <taxon>Lactobacillaceae</taxon>
        <taxon>Limosilactobacillus</taxon>
    </lineage>
</organism>